<protein>
    <recommendedName>
        <fullName evidence="1">1-(5-phosphoribosyl)-5-[(5-phosphoribosylamino)methylideneamino] imidazole-4-carboxamide isomerase</fullName>
        <ecNumber evidence="1">5.3.1.16</ecNumber>
    </recommendedName>
    <alternativeName>
        <fullName evidence="1">Phosphoribosylformimino-5-aminoimidazole carboxamide ribotide isomerase</fullName>
    </alternativeName>
</protein>
<keyword id="KW-0028">Amino-acid biosynthesis</keyword>
<keyword id="KW-0963">Cytoplasm</keyword>
<keyword id="KW-0368">Histidine biosynthesis</keyword>
<keyword id="KW-0413">Isomerase</keyword>
<reference key="1">
    <citation type="journal article" date="2009" name="PLoS Genet.">
        <title>Adaptations to submarine hydrothermal environments exemplified by the genome of Nautilia profundicola.</title>
        <authorList>
            <person name="Campbell B.J."/>
            <person name="Smith J.L."/>
            <person name="Hanson T.E."/>
            <person name="Klotz M.G."/>
            <person name="Stein L.Y."/>
            <person name="Lee C.K."/>
            <person name="Wu D."/>
            <person name="Robinson J.M."/>
            <person name="Khouri H.M."/>
            <person name="Eisen J.A."/>
            <person name="Cary S.C."/>
        </authorList>
    </citation>
    <scope>NUCLEOTIDE SEQUENCE [LARGE SCALE GENOMIC DNA]</scope>
    <source>
        <strain>ATCC BAA-1463 / DSM 18972 / AmH</strain>
    </source>
</reference>
<organism>
    <name type="scientific">Nautilia profundicola (strain ATCC BAA-1463 / DSM 18972 / AmH)</name>
    <dbReference type="NCBI Taxonomy" id="598659"/>
    <lineage>
        <taxon>Bacteria</taxon>
        <taxon>Pseudomonadati</taxon>
        <taxon>Campylobacterota</taxon>
        <taxon>Epsilonproteobacteria</taxon>
        <taxon>Nautiliales</taxon>
        <taxon>Nautiliaceae</taxon>
        <taxon>Nautilia</taxon>
    </lineage>
</organism>
<sequence>MIIFPAIDLKDGQAVRLTKGLMDSAKVYSNEPYELAKRFEEMGAEWLHIVDLNGAFAGEPKNIEQIEKIRKNTNLKIQLGGGIRDEDTIKRYLDLGINRLILGSIAAKNPKLVSELAEKYPIAVGIDAKDGFVAIDGWDKTEGILAKDLAEKYKDSKIECIIATDISKDGTLTGLNIDFILEIQNASQKPVIASGGVASEEDIKKVKENNIYGVIIGKAFYEGKIDLQNVLRENA</sequence>
<gene>
    <name evidence="1" type="primary">hisA</name>
    <name type="ordered locus">NAMH_0133</name>
</gene>
<accession>B9L7G2</accession>
<feature type="chain" id="PRO_1000148981" description="1-(5-phosphoribosyl)-5-[(5-phosphoribosylamino)methylideneamino] imidazole-4-carboxamide isomerase">
    <location>
        <begin position="1"/>
        <end position="235"/>
    </location>
</feature>
<feature type="active site" description="Proton acceptor" evidence="1">
    <location>
        <position position="8"/>
    </location>
</feature>
<feature type="active site" description="Proton donor" evidence="1">
    <location>
        <position position="127"/>
    </location>
</feature>
<name>HIS4_NAUPA</name>
<evidence type="ECO:0000255" key="1">
    <source>
        <dbReference type="HAMAP-Rule" id="MF_01014"/>
    </source>
</evidence>
<comment type="catalytic activity">
    <reaction evidence="1">
        <text>1-(5-phospho-beta-D-ribosyl)-5-[(5-phospho-beta-D-ribosylamino)methylideneamino]imidazole-4-carboxamide = 5-[(5-phospho-1-deoxy-D-ribulos-1-ylimino)methylamino]-1-(5-phospho-beta-D-ribosyl)imidazole-4-carboxamide</text>
        <dbReference type="Rhea" id="RHEA:15469"/>
        <dbReference type="ChEBI" id="CHEBI:58435"/>
        <dbReference type="ChEBI" id="CHEBI:58525"/>
        <dbReference type="EC" id="5.3.1.16"/>
    </reaction>
</comment>
<comment type="pathway">
    <text evidence="1">Amino-acid biosynthesis; L-histidine biosynthesis; L-histidine from 5-phospho-alpha-D-ribose 1-diphosphate: step 4/9.</text>
</comment>
<comment type="subcellular location">
    <subcellularLocation>
        <location evidence="1">Cytoplasm</location>
    </subcellularLocation>
</comment>
<comment type="similarity">
    <text evidence="1">Belongs to the HisA/HisF family.</text>
</comment>
<dbReference type="EC" id="5.3.1.16" evidence="1"/>
<dbReference type="EMBL" id="CP001279">
    <property type="protein sequence ID" value="ACM93085.1"/>
    <property type="molecule type" value="Genomic_DNA"/>
</dbReference>
<dbReference type="RefSeq" id="WP_015902137.1">
    <property type="nucleotide sequence ID" value="NC_012115.1"/>
</dbReference>
<dbReference type="SMR" id="B9L7G2"/>
<dbReference type="STRING" id="598659.NAMH_0133"/>
<dbReference type="KEGG" id="nam:NAMH_0133"/>
<dbReference type="eggNOG" id="COG0106">
    <property type="taxonomic scope" value="Bacteria"/>
</dbReference>
<dbReference type="HOGENOM" id="CLU_048577_1_2_7"/>
<dbReference type="OrthoDB" id="9807749at2"/>
<dbReference type="UniPathway" id="UPA00031">
    <property type="reaction ID" value="UER00009"/>
</dbReference>
<dbReference type="Proteomes" id="UP000000448">
    <property type="component" value="Chromosome"/>
</dbReference>
<dbReference type="GO" id="GO:0005737">
    <property type="term" value="C:cytoplasm"/>
    <property type="evidence" value="ECO:0007669"/>
    <property type="project" value="UniProtKB-SubCell"/>
</dbReference>
<dbReference type="GO" id="GO:0003949">
    <property type="term" value="F:1-(5-phosphoribosyl)-5-[(5-phosphoribosylamino)methylideneamino]imidazole-4-carboxamide isomerase activity"/>
    <property type="evidence" value="ECO:0007669"/>
    <property type="project" value="UniProtKB-UniRule"/>
</dbReference>
<dbReference type="GO" id="GO:0000105">
    <property type="term" value="P:L-histidine biosynthetic process"/>
    <property type="evidence" value="ECO:0007669"/>
    <property type="project" value="UniProtKB-UniRule"/>
</dbReference>
<dbReference type="GO" id="GO:0000162">
    <property type="term" value="P:L-tryptophan biosynthetic process"/>
    <property type="evidence" value="ECO:0007669"/>
    <property type="project" value="TreeGrafter"/>
</dbReference>
<dbReference type="CDD" id="cd04732">
    <property type="entry name" value="HisA"/>
    <property type="match status" value="1"/>
</dbReference>
<dbReference type="FunFam" id="3.20.20.70:FF:000009">
    <property type="entry name" value="1-(5-phosphoribosyl)-5-[(5-phosphoribosylamino)methylideneamino] imidazole-4-carboxamide isomerase"/>
    <property type="match status" value="1"/>
</dbReference>
<dbReference type="Gene3D" id="3.20.20.70">
    <property type="entry name" value="Aldolase class I"/>
    <property type="match status" value="1"/>
</dbReference>
<dbReference type="HAMAP" id="MF_01014">
    <property type="entry name" value="HisA"/>
    <property type="match status" value="1"/>
</dbReference>
<dbReference type="InterPro" id="IPR013785">
    <property type="entry name" value="Aldolase_TIM"/>
</dbReference>
<dbReference type="InterPro" id="IPR006062">
    <property type="entry name" value="His_biosynth"/>
</dbReference>
<dbReference type="InterPro" id="IPR006063">
    <property type="entry name" value="HisA_bact_arch"/>
</dbReference>
<dbReference type="InterPro" id="IPR044524">
    <property type="entry name" value="Isoase_HisA-like"/>
</dbReference>
<dbReference type="InterPro" id="IPR023016">
    <property type="entry name" value="Isoase_HisA-like_bact"/>
</dbReference>
<dbReference type="InterPro" id="IPR011060">
    <property type="entry name" value="RibuloseP-bd_barrel"/>
</dbReference>
<dbReference type="NCBIfam" id="TIGR00007">
    <property type="entry name" value="1-(5-phosphoribosyl)-5-[(5-phosphoribosylamino)methylideneamino]imidazole-4-carboxamide isomerase"/>
    <property type="match status" value="1"/>
</dbReference>
<dbReference type="PANTHER" id="PTHR43090">
    <property type="entry name" value="1-(5-PHOSPHORIBOSYL)-5-[(5-PHOSPHORIBOSYLAMINO)METHYLIDENEAMINO] IMIDAZOLE-4-CARBOXAMIDE ISOMERASE"/>
    <property type="match status" value="1"/>
</dbReference>
<dbReference type="PANTHER" id="PTHR43090:SF2">
    <property type="entry name" value="1-(5-PHOSPHORIBOSYL)-5-[(5-PHOSPHORIBOSYLAMINO)METHYLIDENEAMINO] IMIDAZOLE-4-CARBOXAMIDE ISOMERASE"/>
    <property type="match status" value="1"/>
</dbReference>
<dbReference type="Pfam" id="PF00977">
    <property type="entry name" value="His_biosynth"/>
    <property type="match status" value="1"/>
</dbReference>
<dbReference type="SUPFAM" id="SSF51366">
    <property type="entry name" value="Ribulose-phoshate binding barrel"/>
    <property type="match status" value="1"/>
</dbReference>
<proteinExistence type="inferred from homology"/>